<gene>
    <name evidence="1" type="primary">prfA</name>
    <name type="ordered locus">RT0516</name>
</gene>
<reference key="1">
    <citation type="journal article" date="2004" name="J. Bacteriol.">
        <title>Complete genome sequence of Rickettsia typhi and comparison with sequences of other Rickettsiae.</title>
        <authorList>
            <person name="McLeod M.P."/>
            <person name="Qin X."/>
            <person name="Karpathy S.E."/>
            <person name="Gioia J."/>
            <person name="Highlander S.K."/>
            <person name="Fox G.E."/>
            <person name="McNeill T.Z."/>
            <person name="Jiang H."/>
            <person name="Muzny D."/>
            <person name="Jacob L.S."/>
            <person name="Hawes A.C."/>
            <person name="Sodergren E."/>
            <person name="Gill R."/>
            <person name="Hume J."/>
            <person name="Morgan M."/>
            <person name="Fan G."/>
            <person name="Amin A.G."/>
            <person name="Gibbs R.A."/>
            <person name="Hong C."/>
            <person name="Yu X.-J."/>
            <person name="Walker D.H."/>
            <person name="Weinstock G.M."/>
        </authorList>
    </citation>
    <scope>NUCLEOTIDE SEQUENCE [LARGE SCALE GENOMIC DNA]</scope>
    <source>
        <strain>ATCC VR-144 / Wilmington</strain>
    </source>
</reference>
<dbReference type="EMBL" id="AE017197">
    <property type="protein sequence ID" value="AAU03985.1"/>
    <property type="molecule type" value="Genomic_DNA"/>
</dbReference>
<dbReference type="RefSeq" id="WP_011190966.1">
    <property type="nucleotide sequence ID" value="NC_006142.1"/>
</dbReference>
<dbReference type="SMR" id="Q68WK7"/>
<dbReference type="KEGG" id="rty:RT0516"/>
<dbReference type="eggNOG" id="COG0216">
    <property type="taxonomic scope" value="Bacteria"/>
</dbReference>
<dbReference type="HOGENOM" id="CLU_036856_0_1_5"/>
<dbReference type="OrthoDB" id="9806673at2"/>
<dbReference type="Proteomes" id="UP000000604">
    <property type="component" value="Chromosome"/>
</dbReference>
<dbReference type="GO" id="GO:0005737">
    <property type="term" value="C:cytoplasm"/>
    <property type="evidence" value="ECO:0007669"/>
    <property type="project" value="UniProtKB-SubCell"/>
</dbReference>
<dbReference type="GO" id="GO:0016149">
    <property type="term" value="F:translation release factor activity, codon specific"/>
    <property type="evidence" value="ECO:0007669"/>
    <property type="project" value="UniProtKB-UniRule"/>
</dbReference>
<dbReference type="FunFam" id="3.30.160.20:FF:000004">
    <property type="entry name" value="Peptide chain release factor 1"/>
    <property type="match status" value="1"/>
</dbReference>
<dbReference type="FunFam" id="3.30.70.1660:FF:000002">
    <property type="entry name" value="Peptide chain release factor 1"/>
    <property type="match status" value="1"/>
</dbReference>
<dbReference type="Gene3D" id="3.30.160.20">
    <property type="match status" value="1"/>
</dbReference>
<dbReference type="Gene3D" id="3.30.70.1660">
    <property type="match status" value="1"/>
</dbReference>
<dbReference type="Gene3D" id="6.10.140.1950">
    <property type="match status" value="1"/>
</dbReference>
<dbReference type="HAMAP" id="MF_00093">
    <property type="entry name" value="Rel_fac_1"/>
    <property type="match status" value="1"/>
</dbReference>
<dbReference type="InterPro" id="IPR005139">
    <property type="entry name" value="PCRF"/>
</dbReference>
<dbReference type="InterPro" id="IPR000352">
    <property type="entry name" value="Pep_chain_release_fac_I"/>
</dbReference>
<dbReference type="InterPro" id="IPR045853">
    <property type="entry name" value="Pep_chain_release_fac_I_sf"/>
</dbReference>
<dbReference type="InterPro" id="IPR050057">
    <property type="entry name" value="Prokaryotic/Mito_RF"/>
</dbReference>
<dbReference type="InterPro" id="IPR004373">
    <property type="entry name" value="RF-1"/>
</dbReference>
<dbReference type="NCBIfam" id="TIGR00019">
    <property type="entry name" value="prfA"/>
    <property type="match status" value="1"/>
</dbReference>
<dbReference type="NCBIfam" id="NF001859">
    <property type="entry name" value="PRK00591.1"/>
    <property type="match status" value="1"/>
</dbReference>
<dbReference type="PANTHER" id="PTHR43804">
    <property type="entry name" value="LD18447P"/>
    <property type="match status" value="1"/>
</dbReference>
<dbReference type="PANTHER" id="PTHR43804:SF7">
    <property type="entry name" value="LD18447P"/>
    <property type="match status" value="1"/>
</dbReference>
<dbReference type="Pfam" id="PF03462">
    <property type="entry name" value="PCRF"/>
    <property type="match status" value="1"/>
</dbReference>
<dbReference type="Pfam" id="PF00472">
    <property type="entry name" value="RF-1"/>
    <property type="match status" value="1"/>
</dbReference>
<dbReference type="SMART" id="SM00937">
    <property type="entry name" value="PCRF"/>
    <property type="match status" value="1"/>
</dbReference>
<dbReference type="SUPFAM" id="SSF75620">
    <property type="entry name" value="Release factor"/>
    <property type="match status" value="1"/>
</dbReference>
<dbReference type="PROSITE" id="PS00745">
    <property type="entry name" value="RF_PROK_I"/>
    <property type="match status" value="1"/>
</dbReference>
<evidence type="ECO:0000255" key="1">
    <source>
        <dbReference type="HAMAP-Rule" id="MF_00093"/>
    </source>
</evidence>
<comment type="function">
    <text evidence="1">Peptide chain release factor 1 directs the termination of translation in response to the peptide chain termination codons UAG and UAA.</text>
</comment>
<comment type="subcellular location">
    <subcellularLocation>
        <location evidence="1">Cytoplasm</location>
    </subcellularLocation>
</comment>
<comment type="PTM">
    <text evidence="1">Methylated by PrmC. Methylation increases the termination efficiency of RF1.</text>
</comment>
<comment type="similarity">
    <text evidence="1">Belongs to the prokaryotic/mitochondrial release factor family.</text>
</comment>
<sequence>MSFSDNLVKILDKYENLGRKLSSGIIGDEFVKASKEYAELEDIVVKIKEYNKVKSELEEANNLRLEVALDNATLEMINNEIYILENLLPKLERAVRISLLPKDEADSKSAIIEVRAGSGGEEAALFAAVLFNMYQRYAEFKGWRFEILAISNTGIGGYKEASASIKGKDVFSKLKFESGVHRVQRVPETESQGRIHTSAATVAVLPEAEGVDIKIEDKDLRIDTYRSSGAGGQHVNTTDSAVRITHIPTGITVALQDEKSQHKNKAKALKILRARLYEEKRRQKEQERSDSRRWQVGSGDRSERIRTYNFLHGRVSDHRINLTLYKIDEVVKHGQLDEFIEALIANDEAKKLSEL</sequence>
<proteinExistence type="inferred from homology"/>
<feature type="chain" id="PRO_0000177732" description="Peptide chain release factor 1">
    <location>
        <begin position="1"/>
        <end position="355"/>
    </location>
</feature>
<feature type="modified residue" description="N5-methylglutamine" evidence="1">
    <location>
        <position position="233"/>
    </location>
</feature>
<protein>
    <recommendedName>
        <fullName evidence="1">Peptide chain release factor 1</fullName>
        <shortName evidence="1">RF-1</shortName>
    </recommendedName>
</protein>
<accession>Q68WK7</accession>
<organism>
    <name type="scientific">Rickettsia typhi (strain ATCC VR-144 / Wilmington)</name>
    <dbReference type="NCBI Taxonomy" id="257363"/>
    <lineage>
        <taxon>Bacteria</taxon>
        <taxon>Pseudomonadati</taxon>
        <taxon>Pseudomonadota</taxon>
        <taxon>Alphaproteobacteria</taxon>
        <taxon>Rickettsiales</taxon>
        <taxon>Rickettsiaceae</taxon>
        <taxon>Rickettsieae</taxon>
        <taxon>Rickettsia</taxon>
        <taxon>typhus group</taxon>
    </lineage>
</organism>
<keyword id="KW-0963">Cytoplasm</keyword>
<keyword id="KW-0488">Methylation</keyword>
<keyword id="KW-0648">Protein biosynthesis</keyword>
<name>RF1_RICTY</name>